<gene>
    <name type="primary">PID1</name>
    <name type="synonym">NYGGF4</name>
    <name type="synonym">PCLI1</name>
    <name type="ORF">HMFN2073</name>
</gene>
<organism>
    <name type="scientific">Homo sapiens</name>
    <name type="common">Human</name>
    <dbReference type="NCBI Taxonomy" id="9606"/>
    <lineage>
        <taxon>Eukaryota</taxon>
        <taxon>Metazoa</taxon>
        <taxon>Chordata</taxon>
        <taxon>Craniata</taxon>
        <taxon>Vertebrata</taxon>
        <taxon>Euteleostomi</taxon>
        <taxon>Mammalia</taxon>
        <taxon>Eutheria</taxon>
        <taxon>Euarchontoglires</taxon>
        <taxon>Primates</taxon>
        <taxon>Haplorrhini</taxon>
        <taxon>Catarrhini</taxon>
        <taxon>Hominidae</taxon>
        <taxon>Homo</taxon>
    </lineage>
</organism>
<accession>Q7Z2X4</accession>
<accession>B3KU82</accession>
<accession>Q68CJ2</accession>
<accession>Q6ZUS3</accession>
<accession>Q8IXL0</accession>
<accession>Q9NWP6</accession>
<comment type="function">
    <text evidence="5">Increases proliferation of preadipocytes without affecting adipocytic differentiation.</text>
</comment>
<comment type="subunit">
    <text evidence="6">Found in a complex with PID1/PCLI1, LRP1 and CUBNI. Interacts with LRP1 and CUBN.</text>
</comment>
<comment type="interaction">
    <interactant intactId="EBI-10256685">
        <id>Q7Z2X4</id>
    </interactant>
    <interactant intactId="EBI-10173507">
        <id>Q6UY14-3</id>
        <label>ADAMTSL4</label>
    </interactant>
    <organismsDiffer>false</organismsDiffer>
    <experiments>3</experiments>
</comment>
<comment type="interaction">
    <interactant intactId="EBI-10256685">
        <id>Q7Z2X4</id>
    </interactant>
    <interactant intactId="EBI-744695">
        <id>Q8N9N5</id>
        <label>BANP</label>
    </interactant>
    <organismsDiffer>false</organismsDiffer>
    <experiments>3</experiments>
</comment>
<comment type="interaction">
    <interactant intactId="EBI-10256685">
        <id>Q7Z2X4</id>
    </interactant>
    <interactant intactId="EBI-741724">
        <id>Q8NA61</id>
        <label>CBY2</label>
    </interactant>
    <organismsDiffer>false</organismsDiffer>
    <experiments>3</experiments>
</comment>
<comment type="interaction">
    <interactant intactId="EBI-10256685">
        <id>Q7Z2X4</id>
    </interactant>
    <interactant intactId="EBI-748171">
        <id>O43186</id>
        <label>CRX</label>
    </interactant>
    <organismsDiffer>false</organismsDiffer>
    <experiments>3</experiments>
</comment>
<comment type="interaction">
    <interactant intactId="EBI-10256685">
        <id>Q7Z2X4</id>
    </interactant>
    <interactant intactId="EBI-618309">
        <id>Q08379</id>
        <label>GOLGA2</label>
    </interactant>
    <organismsDiffer>false</organismsDiffer>
    <experiments>3</experiments>
</comment>
<comment type="interaction">
    <interactant intactId="EBI-10256685">
        <id>Q7Z2X4</id>
    </interactant>
    <interactant intactId="EBI-349832">
        <id>Q9HD26</id>
        <label>GOPC</label>
    </interactant>
    <organismsDiffer>false</organismsDiffer>
    <experiments>3</experiments>
</comment>
<comment type="interaction">
    <interactant intactId="EBI-10256685">
        <id>Q7Z2X4</id>
    </interactant>
    <interactant intactId="EBI-724076">
        <id>Q99750</id>
        <label>MDFI</label>
    </interactant>
    <organismsDiffer>false</organismsDiffer>
    <experiments>3</experiments>
</comment>
<comment type="interaction">
    <interactant intactId="EBI-10256685">
        <id>Q7Z2X4</id>
    </interactant>
    <interactant intactId="EBI-741141">
        <id>P15531</id>
        <label>NME1</label>
    </interactant>
    <organismsDiffer>false</organismsDiffer>
    <experiments>3</experiments>
</comment>
<comment type="interaction">
    <interactant intactId="EBI-10256685">
        <id>Q7Z2X4</id>
    </interactant>
    <interactant intactId="EBI-945833">
        <id>Q7Z3S9</id>
        <label>NOTCH2NLA</label>
    </interactant>
    <organismsDiffer>false</organismsDiffer>
    <experiments>3</experiments>
</comment>
<comment type="interaction">
    <interactant intactId="EBI-10256685">
        <id>Q7Z2X4</id>
    </interactant>
    <interactant intactId="EBI-741515">
        <id>Q9NVV9</id>
        <label>THAP1</label>
    </interactant>
    <organismsDiffer>false</organismsDiffer>
    <experiments>3</experiments>
</comment>
<comment type="interaction">
    <interactant intactId="EBI-10256685">
        <id>Q7Z2X4</id>
    </interactant>
    <interactant intactId="EBI-54455455">
        <id>Q96T11</id>
    </interactant>
    <organismsDiffer>false</organismsDiffer>
    <experiments>2</experiments>
</comment>
<comment type="interaction">
    <interactant intactId="EBI-11953174">
        <id>Q7Z2X4-3</id>
    </interactant>
    <interactant intactId="EBI-11523759">
        <id>Q8N684-3</id>
        <label>CPSF7</label>
    </interactant>
    <organismsDiffer>false</organismsDiffer>
    <experiments>3</experiments>
</comment>
<comment type="interaction">
    <interactant intactId="EBI-11953174">
        <id>Q7Z2X4-3</id>
    </interactant>
    <interactant intactId="EBI-10239299">
        <id>Q9NQM4</id>
        <label>DNAAF6</label>
    </interactant>
    <organismsDiffer>false</organismsDiffer>
    <experiments>3</experiments>
</comment>
<comment type="subcellular location">
    <subcellularLocation>
        <location evidence="5">Cytoplasm</location>
    </subcellularLocation>
</comment>
<comment type="alternative products">
    <event type="alternative splicing"/>
    <isoform>
        <id>Q7Z2X4-1</id>
        <name>1</name>
        <sequence type="displayed"/>
    </isoform>
    <isoform>
        <id>Q7Z2X4-2</id>
        <name>2</name>
        <sequence type="described" ref="VSP_022910"/>
    </isoform>
    <isoform>
        <id>Q7Z2X4-3</id>
        <name>3</name>
        <sequence type="described" ref="VSP_022909 VSP_022912"/>
    </isoform>
    <isoform>
        <id>Q7Z2X4-4</id>
        <name>4</name>
        <sequence type="described" ref="VSP_022911"/>
    </isoform>
</comment>
<comment type="tissue specificity">
    <text evidence="5">Expressed in subcutaneous fat, heart, skeletal muscle, brain, colon, thymus, spleen, kidney, liver, small intestine, placenta, lung and peripheral blood leukocyte.</text>
</comment>
<comment type="induction">
    <text evidence="5">Up-regulated in fat of obese subjects.</text>
</comment>
<comment type="polymorphism">
    <text evidence="7">Some sequences seem to have a duplication of exon 2.</text>
</comment>
<comment type="sequence caution" evidence="10">
    <conflict type="erroneous initiation">
        <sequence resource="EMBL-CDS" id="BAD38656"/>
    </conflict>
</comment>
<name>PCLI1_HUMAN</name>
<proteinExistence type="evidence at protein level"/>
<reference key="1">
    <citation type="journal article" date="2004" name="Oncogene">
        <title>Expression profiling and differential screening between hepatoblastomas and the corresponding normal livers: identification of high expression of the PLK1 oncogene as a poor-prognostic indicator of hepatoblastomas.</title>
        <authorList>
            <person name="Yamada S."/>
            <person name="Ohira M."/>
            <person name="Horie H."/>
            <person name="Ando K."/>
            <person name="Takayasu H."/>
            <person name="Suzuki Y."/>
            <person name="Sugano S."/>
            <person name="Hirata T."/>
            <person name="Goto T."/>
            <person name="Matsunaga T."/>
            <person name="Hiyama E."/>
            <person name="Hayashi Y."/>
            <person name="Ando H."/>
            <person name="Suita S."/>
            <person name="Kaneko M."/>
            <person name="Sasaki F."/>
            <person name="Hashizume K."/>
            <person name="Ohnuma N."/>
            <person name="Nakagawara A."/>
        </authorList>
    </citation>
    <scope>NUCLEOTIDE SEQUENCE [MRNA] (ISOFORM 4)</scope>
    <source>
        <tissue>Liver</tissue>
    </source>
</reference>
<reference key="2">
    <citation type="journal article" date="2006" name="Gene">
        <title>Identification and characterization of NYGGF4, a novel gene containing a phosphotyrosine-binding (PTB) domain that stimulates 3T3-L1 preadipocytes proliferation.</title>
        <authorList>
            <person name="Wang B."/>
            <person name="Zhang M."/>
            <person name="Ni Y.-H."/>
            <person name="Liu F."/>
            <person name="Fan H.-Q."/>
            <person name="Fei L."/>
            <person name="Pan X.-Q."/>
            <person name="Guo M."/>
            <person name="Chen R.-H."/>
            <person name="Guo X.-R."/>
        </authorList>
    </citation>
    <scope>NUCLEOTIDE SEQUENCE [MRNA] (ISOFORM 1)</scope>
    <scope>FUNCTION</scope>
    <scope>SUBCELLULAR LOCATION</scope>
    <scope>INDUCTION</scope>
    <scope>TISSUE SPECIFICITY</scope>
    <source>
        <tissue>Adipose tissue</tissue>
    </source>
</reference>
<reference key="3">
    <citation type="journal article" date="2004" name="Nat. Genet.">
        <title>Complete sequencing and characterization of 21,243 full-length human cDNAs.</title>
        <authorList>
            <person name="Ota T."/>
            <person name="Suzuki Y."/>
            <person name="Nishikawa T."/>
            <person name="Otsuki T."/>
            <person name="Sugiyama T."/>
            <person name="Irie R."/>
            <person name="Wakamatsu A."/>
            <person name="Hayashi K."/>
            <person name="Sato H."/>
            <person name="Nagai K."/>
            <person name="Kimura K."/>
            <person name="Makita H."/>
            <person name="Sekine M."/>
            <person name="Obayashi M."/>
            <person name="Nishi T."/>
            <person name="Shibahara T."/>
            <person name="Tanaka T."/>
            <person name="Ishii S."/>
            <person name="Yamamoto J."/>
            <person name="Saito K."/>
            <person name="Kawai Y."/>
            <person name="Isono Y."/>
            <person name="Nakamura Y."/>
            <person name="Nagahari K."/>
            <person name="Murakami K."/>
            <person name="Yasuda T."/>
            <person name="Iwayanagi T."/>
            <person name="Wagatsuma M."/>
            <person name="Shiratori A."/>
            <person name="Sudo H."/>
            <person name="Hosoiri T."/>
            <person name="Kaku Y."/>
            <person name="Kodaira H."/>
            <person name="Kondo H."/>
            <person name="Sugawara M."/>
            <person name="Takahashi M."/>
            <person name="Kanda K."/>
            <person name="Yokoi T."/>
            <person name="Furuya T."/>
            <person name="Kikkawa E."/>
            <person name="Omura Y."/>
            <person name="Abe K."/>
            <person name="Kamihara K."/>
            <person name="Katsuta N."/>
            <person name="Sato K."/>
            <person name="Tanikawa M."/>
            <person name="Yamazaki M."/>
            <person name="Ninomiya K."/>
            <person name="Ishibashi T."/>
            <person name="Yamashita H."/>
            <person name="Murakawa K."/>
            <person name="Fujimori K."/>
            <person name="Tanai H."/>
            <person name="Kimata M."/>
            <person name="Watanabe M."/>
            <person name="Hiraoka S."/>
            <person name="Chiba Y."/>
            <person name="Ishida S."/>
            <person name="Ono Y."/>
            <person name="Takiguchi S."/>
            <person name="Watanabe S."/>
            <person name="Yosida M."/>
            <person name="Hotuta T."/>
            <person name="Kusano J."/>
            <person name="Kanehori K."/>
            <person name="Takahashi-Fujii A."/>
            <person name="Hara H."/>
            <person name="Tanase T.-O."/>
            <person name="Nomura Y."/>
            <person name="Togiya S."/>
            <person name="Komai F."/>
            <person name="Hara R."/>
            <person name="Takeuchi K."/>
            <person name="Arita M."/>
            <person name="Imose N."/>
            <person name="Musashino K."/>
            <person name="Yuuki H."/>
            <person name="Oshima A."/>
            <person name="Sasaki N."/>
            <person name="Aotsuka S."/>
            <person name="Yoshikawa Y."/>
            <person name="Matsunawa H."/>
            <person name="Ichihara T."/>
            <person name="Shiohata N."/>
            <person name="Sano S."/>
            <person name="Moriya S."/>
            <person name="Momiyama H."/>
            <person name="Satoh N."/>
            <person name="Takami S."/>
            <person name="Terashima Y."/>
            <person name="Suzuki O."/>
            <person name="Nakagawa S."/>
            <person name="Senoh A."/>
            <person name="Mizoguchi H."/>
            <person name="Goto Y."/>
            <person name="Shimizu F."/>
            <person name="Wakebe H."/>
            <person name="Hishigaki H."/>
            <person name="Watanabe T."/>
            <person name="Sugiyama A."/>
            <person name="Takemoto M."/>
            <person name="Kawakami B."/>
            <person name="Yamazaki M."/>
            <person name="Watanabe K."/>
            <person name="Kumagai A."/>
            <person name="Itakura S."/>
            <person name="Fukuzumi Y."/>
            <person name="Fujimori Y."/>
            <person name="Komiyama M."/>
            <person name="Tashiro H."/>
            <person name="Tanigami A."/>
            <person name="Fujiwara T."/>
            <person name="Ono T."/>
            <person name="Yamada K."/>
            <person name="Fujii Y."/>
            <person name="Ozaki K."/>
            <person name="Hirao M."/>
            <person name="Ohmori Y."/>
            <person name="Kawabata A."/>
            <person name="Hikiji T."/>
            <person name="Kobatake N."/>
            <person name="Inagaki H."/>
            <person name="Ikema Y."/>
            <person name="Okamoto S."/>
            <person name="Okitani R."/>
            <person name="Kawakami T."/>
            <person name="Noguchi S."/>
            <person name="Itoh T."/>
            <person name="Shigeta K."/>
            <person name="Senba T."/>
            <person name="Matsumura K."/>
            <person name="Nakajima Y."/>
            <person name="Mizuno T."/>
            <person name="Morinaga M."/>
            <person name="Sasaki M."/>
            <person name="Togashi T."/>
            <person name="Oyama M."/>
            <person name="Hata H."/>
            <person name="Watanabe M."/>
            <person name="Komatsu T."/>
            <person name="Mizushima-Sugano J."/>
            <person name="Satoh T."/>
            <person name="Shirai Y."/>
            <person name="Takahashi Y."/>
            <person name="Nakagawa K."/>
            <person name="Okumura K."/>
            <person name="Nagase T."/>
            <person name="Nomura N."/>
            <person name="Kikuchi H."/>
            <person name="Masuho Y."/>
            <person name="Yamashita R."/>
            <person name="Nakai K."/>
            <person name="Yada T."/>
            <person name="Nakamura Y."/>
            <person name="Ohara O."/>
            <person name="Isogai T."/>
            <person name="Sugano S."/>
        </authorList>
    </citation>
    <scope>NUCLEOTIDE SEQUENCE [LARGE SCALE MRNA] (ISOFORMS 1; 2 AND 4)</scope>
    <scope>VARIANT HIS-PHE-GLN-THR-MET-LEU-LYS-SER-LYS-LEU-ASN-VAL-LEU-THR-LEU-LYS-LYS-GLU-PRO-LEU-PRO-ALA-VAL-ILE-PHE-HIS-GLU-PRO-GLU-ALA-ILE-GLU-LEU-CYS-THR-THR-THR-PRO-LEU-MET-LYS-THR-ARG-THR-HIS-SER-GLY-CYS-LYS-43 INS</scope>
    <scope>POLYMORPHISM</scope>
    <source>
        <tissue>Brain</tissue>
        <tissue>Ileal mucosa</tissue>
        <tissue>Tongue</tissue>
    </source>
</reference>
<reference key="4">
    <citation type="submission" date="2005-07" db="EMBL/GenBank/DDBJ databases">
        <authorList>
            <person name="Mural R.J."/>
            <person name="Istrail S."/>
            <person name="Sutton G.G."/>
            <person name="Florea L."/>
            <person name="Halpern A.L."/>
            <person name="Mobarry C.M."/>
            <person name="Lippert R."/>
            <person name="Walenz B."/>
            <person name="Shatkay H."/>
            <person name="Dew I."/>
            <person name="Miller J.R."/>
            <person name="Flanigan M.J."/>
            <person name="Edwards N.J."/>
            <person name="Bolanos R."/>
            <person name="Fasulo D."/>
            <person name="Halldorsson B.V."/>
            <person name="Hannenhalli S."/>
            <person name="Turner R."/>
            <person name="Yooseph S."/>
            <person name="Lu F."/>
            <person name="Nusskern D.R."/>
            <person name="Shue B.C."/>
            <person name="Zheng X.H."/>
            <person name="Zhong F."/>
            <person name="Delcher A.L."/>
            <person name="Huson D.H."/>
            <person name="Kravitz S.A."/>
            <person name="Mouchard L."/>
            <person name="Reinert K."/>
            <person name="Remington K.A."/>
            <person name="Clark A.G."/>
            <person name="Waterman M.S."/>
            <person name="Eichler E.E."/>
            <person name="Adams M.D."/>
            <person name="Hunkapiller M.W."/>
            <person name="Myers E.W."/>
            <person name="Venter J.C."/>
        </authorList>
    </citation>
    <scope>NUCLEOTIDE SEQUENCE [LARGE SCALE GENOMIC DNA]</scope>
</reference>
<reference key="5">
    <citation type="journal article" date="2004" name="Genome Res.">
        <title>The status, quality, and expansion of the NIH full-length cDNA project: the Mammalian Gene Collection (MGC).</title>
        <authorList>
            <consortium name="The MGC Project Team"/>
        </authorList>
    </citation>
    <scope>NUCLEOTIDE SEQUENCE [LARGE SCALE MRNA] (ISOFORM 3)</scope>
    <source>
        <tissue>Ovary</tissue>
    </source>
</reference>
<reference key="6">
    <citation type="journal article" date="2007" name="Mol. Cell. Proteomics">
        <title>Identification of the ligands of protein interaction domains through a functional approach.</title>
        <authorList>
            <person name="Caratu G."/>
            <person name="Allegra D."/>
            <person name="Bimonte M."/>
            <person name="Schiattarella G.G."/>
            <person name="D'Ambrosio C."/>
            <person name="Scaloni A."/>
            <person name="Napolitano M."/>
            <person name="Russo T."/>
            <person name="Zambrano N."/>
        </authorList>
    </citation>
    <scope>IDENTIFICATION IN A COMPLEX WITH LRP1 AND CUBN</scope>
    <scope>INTERACTION WITH LRP1 AND CUBN</scope>
</reference>
<feature type="chain" id="PRO_0000274900" description="PTB-containing, cubilin and LRP1-interacting protein">
    <location>
        <begin position="1"/>
        <end position="250"/>
    </location>
</feature>
<feature type="domain" description="PID" evidence="2">
    <location>
        <begin position="93"/>
        <end position="250"/>
    </location>
</feature>
<feature type="region of interest" description="Disordered" evidence="3">
    <location>
        <begin position="229"/>
        <end position="250"/>
    </location>
</feature>
<feature type="compositionally biased region" description="Acidic residues" evidence="3">
    <location>
        <begin position="241"/>
        <end position="250"/>
    </location>
</feature>
<feature type="modified residue" description="Phosphoserine" evidence="1">
    <location>
        <position position="236"/>
    </location>
</feature>
<feature type="modified residue" description="Phosphoserine" evidence="1">
    <location>
        <position position="247"/>
    </location>
</feature>
<feature type="splice variant" id="VSP_022909" description="In isoform 3." evidence="9">
    <location>
        <begin position="1"/>
        <end position="82"/>
    </location>
</feature>
<feature type="splice variant" id="VSP_022910" description="In isoform 2." evidence="7">
    <original>MFSLPLSLPLCEDTAFLPSKCCSSHKTIKQARTLIMIFLASGT</original>
    <variation>MPRIAGNHLMLEESRTCSSPELLDGVWPCQPLHFGLPASEM</variation>
    <location>
        <begin position="1"/>
        <end position="43"/>
    </location>
</feature>
<feature type="splice variant" id="VSP_022911" description="In isoform 4." evidence="7 8">
    <original>MFSLPLSLPLCEDTAFLPSKCCSSHKTIKQARTLIMIFLASGT</original>
    <variation>MWQPATERLQ</variation>
    <location>
        <begin position="1"/>
        <end position="43"/>
    </location>
</feature>
<feature type="splice variant" id="VSP_022912" description="In isoform 3." evidence="9">
    <original>MKTRTHSGCK</original>
    <variation>MWQPATERLQ</variation>
    <location>
        <begin position="83"/>
        <end position="92"/>
    </location>
</feature>
<feature type="sequence variant" id="VAR_030361" description="In variant with duplicated exon 2." evidence="4">
    <original>T</original>
    <variation>THFQTMLKSKLNVLTLKKEPLPAVIFHEPEAIELCTTTPLMKTRTHSGCK</variation>
    <location>
        <position position="43"/>
    </location>
</feature>
<dbReference type="EMBL" id="AB075874">
    <property type="protein sequence ID" value="BAD38656.1"/>
    <property type="status" value="ALT_INIT"/>
    <property type="molecule type" value="mRNA"/>
</dbReference>
<dbReference type="EMBL" id="AY317148">
    <property type="protein sequence ID" value="AAP79437.1"/>
    <property type="molecule type" value="mRNA"/>
</dbReference>
<dbReference type="EMBL" id="AK000708">
    <property type="protein sequence ID" value="BAA91333.1"/>
    <property type="molecule type" value="mRNA"/>
</dbReference>
<dbReference type="EMBL" id="AK096636">
    <property type="protein sequence ID" value="BAG53344.1"/>
    <property type="molecule type" value="mRNA"/>
</dbReference>
<dbReference type="EMBL" id="AK125359">
    <property type="protein sequence ID" value="BAC86145.1"/>
    <property type="molecule type" value="mRNA"/>
</dbReference>
<dbReference type="EMBL" id="CH471063">
    <property type="protein sequence ID" value="EAW70891.1"/>
    <property type="molecule type" value="Genomic_DNA"/>
</dbReference>
<dbReference type="EMBL" id="BC040164">
    <property type="protein sequence ID" value="AAH40164.1"/>
    <property type="molecule type" value="mRNA"/>
</dbReference>
<dbReference type="CCDS" id="CCDS2471.1">
    <molecule id="Q7Z2X4-2"/>
</dbReference>
<dbReference type="CCDS" id="CCDS42830.1">
    <molecule id="Q7Z2X4-4"/>
</dbReference>
<dbReference type="CCDS" id="CCDS82577.1">
    <molecule id="Q7Z2X4-1"/>
</dbReference>
<dbReference type="CCDS" id="CCDS82578.1">
    <molecule id="Q7Z2X4-3"/>
</dbReference>
<dbReference type="RefSeq" id="NP_001094288.1">
    <molecule id="Q7Z2X4-4"/>
    <property type="nucleotide sequence ID" value="NM_001100818.2"/>
</dbReference>
<dbReference type="RefSeq" id="NP_001317085.1">
    <molecule id="Q7Z2X4-1"/>
    <property type="nucleotide sequence ID" value="NM_001330156.1"/>
</dbReference>
<dbReference type="RefSeq" id="NP_001317086.1">
    <molecule id="Q7Z2X4-3"/>
    <property type="nucleotide sequence ID" value="NM_001330157.2"/>
</dbReference>
<dbReference type="RefSeq" id="NP_060403.3">
    <molecule id="Q7Z2X4-2"/>
    <property type="nucleotide sequence ID" value="NM_017933.4"/>
</dbReference>
<dbReference type="SMR" id="Q7Z2X4"/>
<dbReference type="BioGRID" id="120352">
    <property type="interactions" value="28"/>
</dbReference>
<dbReference type="CORUM" id="Q7Z2X4"/>
<dbReference type="FunCoup" id="Q7Z2X4">
    <property type="interactions" value="441"/>
</dbReference>
<dbReference type="IntAct" id="Q7Z2X4">
    <property type="interactions" value="15"/>
</dbReference>
<dbReference type="STRING" id="9606.ENSP00000283937"/>
<dbReference type="GlyGen" id="Q7Z2X4">
    <property type="glycosylation" value="1 site, 1 O-linked glycan (1 site)"/>
</dbReference>
<dbReference type="iPTMnet" id="Q7Z2X4"/>
<dbReference type="PhosphoSitePlus" id="Q7Z2X4"/>
<dbReference type="BioMuta" id="PID1"/>
<dbReference type="DMDM" id="74713284"/>
<dbReference type="jPOST" id="Q7Z2X4"/>
<dbReference type="MassIVE" id="Q7Z2X4"/>
<dbReference type="PaxDb" id="9606-ENSP00000375907"/>
<dbReference type="PeptideAtlas" id="Q7Z2X4"/>
<dbReference type="ProteomicsDB" id="68980">
    <molecule id="Q7Z2X4-1"/>
</dbReference>
<dbReference type="ProteomicsDB" id="68981">
    <molecule id="Q7Z2X4-2"/>
</dbReference>
<dbReference type="ProteomicsDB" id="68982">
    <molecule id="Q7Z2X4-3"/>
</dbReference>
<dbReference type="ProteomicsDB" id="68983">
    <molecule id="Q7Z2X4-4"/>
</dbReference>
<dbReference type="Pumba" id="Q7Z2X4"/>
<dbReference type="Antibodypedia" id="34394">
    <property type="antibodies" value="113 antibodies from 17 providers"/>
</dbReference>
<dbReference type="DNASU" id="55022"/>
<dbReference type="Ensembl" id="ENST00000354069.6">
    <molecule id="Q7Z2X4-1"/>
    <property type="protein sequence ID" value="ENSP00000283937.8"/>
    <property type="gene ID" value="ENSG00000153823.19"/>
</dbReference>
<dbReference type="Ensembl" id="ENST00000392054.7">
    <molecule id="Q7Z2X4-2"/>
    <property type="protein sequence ID" value="ENSP00000375907.3"/>
    <property type="gene ID" value="ENSG00000153823.19"/>
</dbReference>
<dbReference type="Ensembl" id="ENST00000392055.8">
    <molecule id="Q7Z2X4-4"/>
    <property type="protein sequence ID" value="ENSP00000375908.3"/>
    <property type="gene ID" value="ENSG00000153823.19"/>
</dbReference>
<dbReference type="Ensembl" id="ENST00000409462.1">
    <molecule id="Q7Z2X4-3"/>
    <property type="protein sequence ID" value="ENSP00000386826.1"/>
    <property type="gene ID" value="ENSG00000153823.19"/>
</dbReference>
<dbReference type="GeneID" id="55022"/>
<dbReference type="KEGG" id="hsa:55022"/>
<dbReference type="MANE-Select" id="ENST00000392055.8">
    <molecule id="Q7Z2X4-4"/>
    <property type="protein sequence ID" value="ENSP00000375908.3"/>
    <property type="RefSeq nucleotide sequence ID" value="NM_001100818.2"/>
    <property type="RefSeq protein sequence ID" value="NP_001094288.1"/>
</dbReference>
<dbReference type="UCSC" id="uc002vpr.5">
    <molecule id="Q7Z2X4-1"/>
    <property type="organism name" value="human"/>
</dbReference>
<dbReference type="AGR" id="HGNC:26084"/>
<dbReference type="CTD" id="55022"/>
<dbReference type="DisGeNET" id="55022"/>
<dbReference type="GeneCards" id="PID1"/>
<dbReference type="HGNC" id="HGNC:26084">
    <property type="gene designation" value="PID1"/>
</dbReference>
<dbReference type="HPA" id="ENSG00000153823">
    <property type="expression patterns" value="Low tissue specificity"/>
</dbReference>
<dbReference type="MIM" id="612930">
    <property type="type" value="gene"/>
</dbReference>
<dbReference type="neXtProt" id="NX_Q7Z2X4"/>
<dbReference type="OpenTargets" id="ENSG00000153823"/>
<dbReference type="PharmGKB" id="PA162399462"/>
<dbReference type="VEuPathDB" id="HostDB:ENSG00000153823"/>
<dbReference type="eggNOG" id="KOG4448">
    <property type="taxonomic scope" value="Eukaryota"/>
</dbReference>
<dbReference type="GeneTree" id="ENSGT00510000048154"/>
<dbReference type="HOGENOM" id="CLU_088811_0_0_1"/>
<dbReference type="InParanoid" id="Q7Z2X4"/>
<dbReference type="OMA" id="SHAGYKV"/>
<dbReference type="OrthoDB" id="5980998at2759"/>
<dbReference type="PAN-GO" id="Q7Z2X4">
    <property type="GO annotations" value="3 GO annotations based on evolutionary models"/>
</dbReference>
<dbReference type="PhylomeDB" id="Q7Z2X4"/>
<dbReference type="PathwayCommons" id="Q7Z2X4"/>
<dbReference type="SignaLink" id="Q7Z2X4"/>
<dbReference type="BioGRID-ORCS" id="55022">
    <property type="hits" value="13 hits in 1155 CRISPR screens"/>
</dbReference>
<dbReference type="ChiTaRS" id="PID1">
    <property type="organism name" value="human"/>
</dbReference>
<dbReference type="GenomeRNAi" id="55022"/>
<dbReference type="Pharos" id="Q7Z2X4">
    <property type="development level" value="Tbio"/>
</dbReference>
<dbReference type="PRO" id="PR:Q7Z2X4"/>
<dbReference type="Proteomes" id="UP000005640">
    <property type="component" value="Chromosome 2"/>
</dbReference>
<dbReference type="RNAct" id="Q7Z2X4">
    <property type="molecule type" value="protein"/>
</dbReference>
<dbReference type="Bgee" id="ENSG00000153823">
    <property type="expression patterns" value="Expressed in descending thoracic aorta and 181 other cell types or tissues"/>
</dbReference>
<dbReference type="ExpressionAtlas" id="Q7Z2X4">
    <property type="expression patterns" value="baseline and differential"/>
</dbReference>
<dbReference type="GO" id="GO:0005737">
    <property type="term" value="C:cytoplasm"/>
    <property type="evidence" value="ECO:0000314"/>
    <property type="project" value="BHF-UCL"/>
</dbReference>
<dbReference type="GO" id="GO:0071345">
    <property type="term" value="P:cellular response to cytokine stimulus"/>
    <property type="evidence" value="ECO:0000250"/>
    <property type="project" value="BHF-UCL"/>
</dbReference>
<dbReference type="GO" id="GO:0071398">
    <property type="term" value="P:cellular response to fatty acid"/>
    <property type="evidence" value="ECO:0000250"/>
    <property type="project" value="BHF-UCL"/>
</dbReference>
<dbReference type="GO" id="GO:0071354">
    <property type="term" value="P:cellular response to interleukin-6"/>
    <property type="evidence" value="ECO:0000250"/>
    <property type="project" value="BHF-UCL"/>
</dbReference>
<dbReference type="GO" id="GO:0044320">
    <property type="term" value="P:cellular response to leptin stimulus"/>
    <property type="evidence" value="ECO:0007669"/>
    <property type="project" value="Ensembl"/>
</dbReference>
<dbReference type="GO" id="GO:0071356">
    <property type="term" value="P:cellular response to tumor necrosis factor"/>
    <property type="evidence" value="ECO:0000250"/>
    <property type="project" value="BHF-UCL"/>
</dbReference>
<dbReference type="GO" id="GO:0006112">
    <property type="term" value="P:energy reserve metabolic process"/>
    <property type="evidence" value="ECO:0000305"/>
    <property type="project" value="BHF-UCL"/>
</dbReference>
<dbReference type="GO" id="GO:0007005">
    <property type="term" value="P:mitochondrion organization"/>
    <property type="evidence" value="ECO:0000315"/>
    <property type="project" value="BHF-UCL"/>
</dbReference>
<dbReference type="GO" id="GO:2001170">
    <property type="term" value="P:negative regulation of ATP biosynthetic process"/>
    <property type="evidence" value="ECO:0000315"/>
    <property type="project" value="BHF-UCL"/>
</dbReference>
<dbReference type="GO" id="GO:0046325">
    <property type="term" value="P:negative regulation of D-glucose import"/>
    <property type="evidence" value="ECO:0000314"/>
    <property type="project" value="BHF-UCL"/>
</dbReference>
<dbReference type="GO" id="GO:0046627">
    <property type="term" value="P:negative regulation of insulin receptor signaling pathway"/>
    <property type="evidence" value="ECO:0000314"/>
    <property type="project" value="BHF-UCL"/>
</dbReference>
<dbReference type="GO" id="GO:1903077">
    <property type="term" value="P:negative regulation of protein localization to plasma membrane"/>
    <property type="evidence" value="ECO:0000314"/>
    <property type="project" value="BHF-UCL"/>
</dbReference>
<dbReference type="GO" id="GO:2001171">
    <property type="term" value="P:positive regulation of ATP biosynthetic process"/>
    <property type="evidence" value="ECO:0000250"/>
    <property type="project" value="BHF-UCL"/>
</dbReference>
<dbReference type="GO" id="GO:0070346">
    <property type="term" value="P:positive regulation of fat cell proliferation"/>
    <property type="evidence" value="ECO:0000314"/>
    <property type="project" value="BHF-UCL"/>
</dbReference>
<dbReference type="GO" id="GO:0010628">
    <property type="term" value="P:positive regulation of gene expression"/>
    <property type="evidence" value="ECO:0000315"/>
    <property type="project" value="BHF-UCL"/>
</dbReference>
<dbReference type="GO" id="GO:2000379">
    <property type="term" value="P:positive regulation of reactive oxygen species metabolic process"/>
    <property type="evidence" value="ECO:0000315"/>
    <property type="project" value="BHF-UCL"/>
</dbReference>
<dbReference type="GO" id="GO:0045944">
    <property type="term" value="P:positive regulation of transcription by RNA polymerase II"/>
    <property type="evidence" value="ECO:0000315"/>
    <property type="project" value="BHF-UCL"/>
</dbReference>
<dbReference type="GO" id="GO:0010635">
    <property type="term" value="P:regulation of mitochondrial fusion"/>
    <property type="evidence" value="ECO:0000305"/>
    <property type="project" value="BHF-UCL"/>
</dbReference>
<dbReference type="GO" id="GO:0051881">
    <property type="term" value="P:regulation of mitochondrial membrane potential"/>
    <property type="evidence" value="ECO:0000250"/>
    <property type="project" value="BHF-UCL"/>
</dbReference>
<dbReference type="GO" id="GO:2000377">
    <property type="term" value="P:regulation of reactive oxygen species metabolic process"/>
    <property type="evidence" value="ECO:0000250"/>
    <property type="project" value="BHF-UCL"/>
</dbReference>
<dbReference type="CDD" id="cd13167">
    <property type="entry name" value="PTB_P-CLI1"/>
    <property type="match status" value="1"/>
</dbReference>
<dbReference type="FunFam" id="2.30.29.30:FF:000156">
    <property type="entry name" value="PTB-containing, cubilin and LRP1-interacting protein"/>
    <property type="match status" value="1"/>
</dbReference>
<dbReference type="Gene3D" id="2.30.29.30">
    <property type="entry name" value="Pleckstrin-homology domain (PH domain)/Phosphotyrosine-binding domain (PTB)"/>
    <property type="match status" value="1"/>
</dbReference>
<dbReference type="InterPro" id="IPR011993">
    <property type="entry name" value="PH-like_dom_sf"/>
</dbReference>
<dbReference type="InterPro" id="IPR039112">
    <property type="entry name" value="PID1"/>
</dbReference>
<dbReference type="InterPro" id="IPR039114">
    <property type="entry name" value="PID1_PTB"/>
</dbReference>
<dbReference type="InterPro" id="IPR006020">
    <property type="entry name" value="PTB/PI_dom"/>
</dbReference>
<dbReference type="PANTHER" id="PTHR16265">
    <property type="entry name" value="PTB-CONTAINING, CUBILIN AND LRP1-INTERACTING PROTEIN"/>
    <property type="match status" value="1"/>
</dbReference>
<dbReference type="PANTHER" id="PTHR16265:SF1">
    <property type="entry name" value="PTB-CONTAINING, CUBILIN AND LRP1-INTERACTING PROTEIN"/>
    <property type="match status" value="1"/>
</dbReference>
<dbReference type="Pfam" id="PF14719">
    <property type="entry name" value="PID_2"/>
    <property type="match status" value="1"/>
</dbReference>
<dbReference type="SMART" id="SM00462">
    <property type="entry name" value="PTB"/>
    <property type="match status" value="1"/>
</dbReference>
<dbReference type="SUPFAM" id="SSF50729">
    <property type="entry name" value="PH domain-like"/>
    <property type="match status" value="1"/>
</dbReference>
<dbReference type="PROSITE" id="PS01179">
    <property type="entry name" value="PID"/>
    <property type="match status" value="1"/>
</dbReference>
<keyword id="KW-0025">Alternative splicing</keyword>
<keyword id="KW-0963">Cytoplasm</keyword>
<keyword id="KW-0597">Phosphoprotein</keyword>
<keyword id="KW-1267">Proteomics identification</keyword>
<keyword id="KW-1185">Reference proteome</keyword>
<protein>
    <recommendedName>
        <fullName>PTB-containing, cubilin and LRP1-interacting protein</fullName>
        <shortName>P-CLI1</shortName>
    </recommendedName>
    <alternativeName>
        <fullName>Phosphotyrosine interaction domain-containing protein 1</fullName>
    </alternativeName>
    <alternativeName>
        <fullName>Protein NYGGF4</fullName>
    </alternativeName>
</protein>
<evidence type="ECO:0000250" key="1">
    <source>
        <dbReference type="UniProtKB" id="Q3UBG2"/>
    </source>
</evidence>
<evidence type="ECO:0000255" key="2">
    <source>
        <dbReference type="PROSITE-ProRule" id="PRU00148"/>
    </source>
</evidence>
<evidence type="ECO:0000256" key="3">
    <source>
        <dbReference type="SAM" id="MobiDB-lite"/>
    </source>
</evidence>
<evidence type="ECO:0000269" key="4">
    <source>
    </source>
</evidence>
<evidence type="ECO:0000269" key="5">
    <source>
    </source>
</evidence>
<evidence type="ECO:0000269" key="6">
    <source>
    </source>
</evidence>
<evidence type="ECO:0000303" key="7">
    <source>
    </source>
</evidence>
<evidence type="ECO:0000303" key="8">
    <source>
    </source>
</evidence>
<evidence type="ECO:0000303" key="9">
    <source>
    </source>
</evidence>
<evidence type="ECO:0000305" key="10"/>
<sequence length="250" mass="28272">MFSLPLSLPLCEDTAFLPSKCCSSHKTIKQARTLIMIFLASGTHFQTMLKSKLNVLTLKKEPLPAVIFHEPEAIELCTTTPLMKTRTHSGCKVTYLGKVSTTGMQFLSGCTEKPVIELWKKHTLAREDVFPANALLEIRPFQVWLHHLDHKGEATVHMDTFQVARIAYCTADHNVSPNIFAWVYREINDDLSYQMDCHAVECESKLEAKKLAHAMMEAFRKTFHSMKSDGRIHSNSSSEEVSQELESDDG</sequence>